<comment type="function">
    <text evidence="1">Involved in the gluconeogenesis. Catalyzes stereospecifically the conversion of dihydroxyacetone phosphate (DHAP) to D-glyceraldehyde-3-phosphate (G3P).</text>
</comment>
<comment type="catalytic activity">
    <reaction evidence="1">
        <text>D-glyceraldehyde 3-phosphate = dihydroxyacetone phosphate</text>
        <dbReference type="Rhea" id="RHEA:18585"/>
        <dbReference type="ChEBI" id="CHEBI:57642"/>
        <dbReference type="ChEBI" id="CHEBI:59776"/>
        <dbReference type="EC" id="5.3.1.1"/>
    </reaction>
</comment>
<comment type="pathway">
    <text evidence="1">Carbohydrate biosynthesis; gluconeogenesis.</text>
</comment>
<comment type="pathway">
    <text evidence="1">Carbohydrate degradation; glycolysis; D-glyceraldehyde 3-phosphate from glycerone phosphate: step 1/1.</text>
</comment>
<comment type="subunit">
    <text evidence="1">Homodimer.</text>
</comment>
<comment type="subcellular location">
    <subcellularLocation>
        <location evidence="1">Cytoplasm</location>
    </subcellularLocation>
</comment>
<comment type="similarity">
    <text evidence="1">Belongs to the triosephosphate isomerase family.</text>
</comment>
<dbReference type="EC" id="5.3.1.1" evidence="1"/>
<dbReference type="EMBL" id="AM743169">
    <property type="protein sequence ID" value="CAQ46835.1"/>
    <property type="molecule type" value="Genomic_DNA"/>
</dbReference>
<dbReference type="RefSeq" id="WP_005410466.1">
    <property type="nucleotide sequence ID" value="NC_010943.1"/>
</dbReference>
<dbReference type="PDB" id="6W4U">
    <property type="method" value="X-ray"/>
    <property type="resolution" value="1.70 A"/>
    <property type="chains" value="A/B=1-251"/>
</dbReference>
<dbReference type="PDBsum" id="6W4U"/>
<dbReference type="SMR" id="B2FNY1"/>
<dbReference type="EnsemblBacteria" id="CAQ46835">
    <property type="protein sequence ID" value="CAQ46835"/>
    <property type="gene ID" value="Smlt3407"/>
</dbReference>
<dbReference type="GeneID" id="93834411"/>
<dbReference type="KEGG" id="sml:Smlt3407"/>
<dbReference type="eggNOG" id="COG0149">
    <property type="taxonomic scope" value="Bacteria"/>
</dbReference>
<dbReference type="HOGENOM" id="CLU_024251_2_1_6"/>
<dbReference type="UniPathway" id="UPA00109">
    <property type="reaction ID" value="UER00189"/>
</dbReference>
<dbReference type="UniPathway" id="UPA00138"/>
<dbReference type="Proteomes" id="UP000008840">
    <property type="component" value="Chromosome"/>
</dbReference>
<dbReference type="GO" id="GO:0005829">
    <property type="term" value="C:cytosol"/>
    <property type="evidence" value="ECO:0007669"/>
    <property type="project" value="TreeGrafter"/>
</dbReference>
<dbReference type="GO" id="GO:0004807">
    <property type="term" value="F:triose-phosphate isomerase activity"/>
    <property type="evidence" value="ECO:0007669"/>
    <property type="project" value="UniProtKB-UniRule"/>
</dbReference>
<dbReference type="GO" id="GO:0006094">
    <property type="term" value="P:gluconeogenesis"/>
    <property type="evidence" value="ECO:0007669"/>
    <property type="project" value="UniProtKB-UniRule"/>
</dbReference>
<dbReference type="GO" id="GO:0046166">
    <property type="term" value="P:glyceraldehyde-3-phosphate biosynthetic process"/>
    <property type="evidence" value="ECO:0007669"/>
    <property type="project" value="TreeGrafter"/>
</dbReference>
<dbReference type="GO" id="GO:0019563">
    <property type="term" value="P:glycerol catabolic process"/>
    <property type="evidence" value="ECO:0007669"/>
    <property type="project" value="TreeGrafter"/>
</dbReference>
<dbReference type="GO" id="GO:0006096">
    <property type="term" value="P:glycolytic process"/>
    <property type="evidence" value="ECO:0007669"/>
    <property type="project" value="UniProtKB-UniRule"/>
</dbReference>
<dbReference type="CDD" id="cd00311">
    <property type="entry name" value="TIM"/>
    <property type="match status" value="1"/>
</dbReference>
<dbReference type="FunFam" id="3.20.20.70:FF:000020">
    <property type="entry name" value="Triosephosphate isomerase"/>
    <property type="match status" value="1"/>
</dbReference>
<dbReference type="Gene3D" id="3.20.20.70">
    <property type="entry name" value="Aldolase class I"/>
    <property type="match status" value="1"/>
</dbReference>
<dbReference type="HAMAP" id="MF_00147_B">
    <property type="entry name" value="TIM_B"/>
    <property type="match status" value="1"/>
</dbReference>
<dbReference type="InterPro" id="IPR013785">
    <property type="entry name" value="Aldolase_TIM"/>
</dbReference>
<dbReference type="InterPro" id="IPR035990">
    <property type="entry name" value="TIM_sf"/>
</dbReference>
<dbReference type="InterPro" id="IPR022896">
    <property type="entry name" value="TrioseP_Isoase_bac/euk"/>
</dbReference>
<dbReference type="InterPro" id="IPR000652">
    <property type="entry name" value="Triosephosphate_isomerase"/>
</dbReference>
<dbReference type="InterPro" id="IPR020861">
    <property type="entry name" value="Triosephosphate_isomerase_AS"/>
</dbReference>
<dbReference type="NCBIfam" id="TIGR00419">
    <property type="entry name" value="tim"/>
    <property type="match status" value="1"/>
</dbReference>
<dbReference type="PANTHER" id="PTHR21139">
    <property type="entry name" value="TRIOSEPHOSPHATE ISOMERASE"/>
    <property type="match status" value="1"/>
</dbReference>
<dbReference type="PANTHER" id="PTHR21139:SF42">
    <property type="entry name" value="TRIOSEPHOSPHATE ISOMERASE"/>
    <property type="match status" value="1"/>
</dbReference>
<dbReference type="Pfam" id="PF00121">
    <property type="entry name" value="TIM"/>
    <property type="match status" value="1"/>
</dbReference>
<dbReference type="SUPFAM" id="SSF51351">
    <property type="entry name" value="Triosephosphate isomerase (TIM)"/>
    <property type="match status" value="1"/>
</dbReference>
<dbReference type="PROSITE" id="PS00171">
    <property type="entry name" value="TIM_1"/>
    <property type="match status" value="1"/>
</dbReference>
<dbReference type="PROSITE" id="PS51440">
    <property type="entry name" value="TIM_2"/>
    <property type="match status" value="1"/>
</dbReference>
<keyword id="KW-0002">3D-structure</keyword>
<keyword id="KW-0963">Cytoplasm</keyword>
<keyword id="KW-0312">Gluconeogenesis</keyword>
<keyword id="KW-0324">Glycolysis</keyword>
<keyword id="KW-0413">Isomerase</keyword>
<keyword id="KW-1185">Reference proteome</keyword>
<name>TPIS_STRMK</name>
<protein>
    <recommendedName>
        <fullName evidence="1">Triosephosphate isomerase</fullName>
        <shortName evidence="1">TIM</shortName>
        <shortName evidence="1">TPI</shortName>
        <ecNumber evidence="1">5.3.1.1</ecNumber>
    </recommendedName>
    <alternativeName>
        <fullName evidence="1">Triose-phosphate isomerase</fullName>
    </alternativeName>
</protein>
<evidence type="ECO:0000255" key="1">
    <source>
        <dbReference type="HAMAP-Rule" id="MF_00147"/>
    </source>
</evidence>
<evidence type="ECO:0007829" key="2">
    <source>
        <dbReference type="PDB" id="6W4U"/>
    </source>
</evidence>
<sequence>MRRKIVAGNWKLHGSRQFANELLGQVAAGLPLEGVDVVILPPLPYLGELVEDFGETGLAFGAQDVSSNEKGAYTGEVCAAMLVEVGARYGLVGHSERRQYHHESSELVARKFAAAQHAGLVPVLCVGETLEQREAGQTEAVIASQLAPVLELVGAAGFAQAVVAYEPVWAIGTGRTATKEQAQQVHAFIRGEVARIDARIADSLPIVYGGSVKPDNAGELFAQPDVDGGLVGGASLVAADFLAIARAAAAN</sequence>
<accession>B2FNY1</accession>
<reference key="1">
    <citation type="journal article" date="2008" name="Genome Biol.">
        <title>The complete genome, comparative and functional analysis of Stenotrophomonas maltophilia reveals an organism heavily shielded by drug resistance determinants.</title>
        <authorList>
            <person name="Crossman L.C."/>
            <person name="Gould V.C."/>
            <person name="Dow J.M."/>
            <person name="Vernikos G.S."/>
            <person name="Okazaki A."/>
            <person name="Sebaihia M."/>
            <person name="Saunders D."/>
            <person name="Arrowsmith C."/>
            <person name="Carver T."/>
            <person name="Peters N."/>
            <person name="Adlem E."/>
            <person name="Kerhornou A."/>
            <person name="Lord A."/>
            <person name="Murphy L."/>
            <person name="Seeger K."/>
            <person name="Squares R."/>
            <person name="Rutter S."/>
            <person name="Quail M.A."/>
            <person name="Rajandream M.A."/>
            <person name="Harris D."/>
            <person name="Churcher C."/>
            <person name="Bentley S.D."/>
            <person name="Parkhill J."/>
            <person name="Thomson N.R."/>
            <person name="Avison M.B."/>
        </authorList>
    </citation>
    <scope>NUCLEOTIDE SEQUENCE [LARGE SCALE GENOMIC DNA]</scope>
    <source>
        <strain>K279a</strain>
    </source>
</reference>
<feature type="chain" id="PRO_1000096537" description="Triosephosphate isomerase">
    <location>
        <begin position="1"/>
        <end position="251"/>
    </location>
</feature>
<feature type="active site" description="Electrophile" evidence="1">
    <location>
        <position position="94"/>
    </location>
</feature>
<feature type="active site" description="Proton acceptor" evidence="1">
    <location>
        <position position="166"/>
    </location>
</feature>
<feature type="binding site" evidence="1">
    <location>
        <begin position="9"/>
        <end position="11"/>
    </location>
    <ligand>
        <name>substrate</name>
    </ligand>
</feature>
<feature type="binding site" evidence="1">
    <location>
        <position position="172"/>
    </location>
    <ligand>
        <name>substrate</name>
    </ligand>
</feature>
<feature type="binding site" evidence="1">
    <location>
        <position position="211"/>
    </location>
    <ligand>
        <name>substrate</name>
    </ligand>
</feature>
<feature type="binding site" evidence="1">
    <location>
        <begin position="232"/>
        <end position="233"/>
    </location>
    <ligand>
        <name>substrate</name>
    </ligand>
</feature>
<feature type="strand" evidence="2">
    <location>
        <begin position="5"/>
        <end position="9"/>
    </location>
</feature>
<feature type="helix" evidence="2">
    <location>
        <begin position="16"/>
        <end position="28"/>
    </location>
</feature>
<feature type="strand" evidence="2">
    <location>
        <begin position="36"/>
        <end position="40"/>
    </location>
</feature>
<feature type="helix" evidence="2">
    <location>
        <begin position="43"/>
        <end position="45"/>
    </location>
</feature>
<feature type="helix" evidence="2">
    <location>
        <begin position="46"/>
        <end position="53"/>
    </location>
</feature>
<feature type="strand" evidence="2">
    <location>
        <begin position="59"/>
        <end position="63"/>
    </location>
</feature>
<feature type="helix" evidence="2">
    <location>
        <begin position="79"/>
        <end position="84"/>
    </location>
</feature>
<feature type="strand" evidence="2">
    <location>
        <begin position="89"/>
        <end position="92"/>
    </location>
</feature>
<feature type="helix" evidence="2">
    <location>
        <begin position="95"/>
        <end position="100"/>
    </location>
</feature>
<feature type="helix" evidence="2">
    <location>
        <begin position="105"/>
        <end position="118"/>
    </location>
</feature>
<feature type="strand" evidence="2">
    <location>
        <begin position="121"/>
        <end position="126"/>
    </location>
</feature>
<feature type="helix" evidence="2">
    <location>
        <begin position="130"/>
        <end position="134"/>
    </location>
</feature>
<feature type="helix" evidence="2">
    <location>
        <begin position="138"/>
        <end position="153"/>
    </location>
</feature>
<feature type="helix" evidence="2">
    <location>
        <begin position="155"/>
        <end position="158"/>
    </location>
</feature>
<feature type="strand" evidence="2">
    <location>
        <begin position="162"/>
        <end position="165"/>
    </location>
</feature>
<feature type="helix" evidence="2">
    <location>
        <begin position="168"/>
        <end position="171"/>
    </location>
</feature>
<feature type="turn" evidence="2">
    <location>
        <begin position="172"/>
        <end position="174"/>
    </location>
</feature>
<feature type="helix" evidence="2">
    <location>
        <begin position="179"/>
        <end position="194"/>
    </location>
</feature>
<feature type="helix" evidence="2">
    <location>
        <begin position="198"/>
        <end position="203"/>
    </location>
</feature>
<feature type="strand" evidence="2">
    <location>
        <begin position="206"/>
        <end position="208"/>
    </location>
</feature>
<feature type="turn" evidence="2">
    <location>
        <begin position="214"/>
        <end position="216"/>
    </location>
</feature>
<feature type="helix" evidence="2">
    <location>
        <begin position="217"/>
        <end position="221"/>
    </location>
</feature>
<feature type="strand" evidence="2">
    <location>
        <begin position="228"/>
        <end position="231"/>
    </location>
</feature>
<feature type="strand" evidence="2">
    <location>
        <begin position="233"/>
        <end position="235"/>
    </location>
</feature>
<feature type="helix" evidence="2">
    <location>
        <begin position="238"/>
        <end position="250"/>
    </location>
</feature>
<gene>
    <name evidence="1" type="primary">tpiA</name>
    <name type="ordered locus">Smlt3407</name>
</gene>
<proteinExistence type="evidence at protein level"/>
<organism>
    <name type="scientific">Stenotrophomonas maltophilia (strain K279a)</name>
    <dbReference type="NCBI Taxonomy" id="522373"/>
    <lineage>
        <taxon>Bacteria</taxon>
        <taxon>Pseudomonadati</taxon>
        <taxon>Pseudomonadota</taxon>
        <taxon>Gammaproteobacteria</taxon>
        <taxon>Lysobacterales</taxon>
        <taxon>Lysobacteraceae</taxon>
        <taxon>Stenotrophomonas</taxon>
        <taxon>Stenotrophomonas maltophilia group</taxon>
    </lineage>
</organism>